<accession>Q8D737</accession>
<gene>
    <name evidence="1" type="primary">cobQ</name>
    <name type="ordered locus">VV2_0330</name>
</gene>
<reference key="1">
    <citation type="submission" date="2002-12" db="EMBL/GenBank/DDBJ databases">
        <title>Complete genome sequence of Vibrio vulnificus CMCP6.</title>
        <authorList>
            <person name="Rhee J.H."/>
            <person name="Kim S.Y."/>
            <person name="Chung S.S."/>
            <person name="Kim J.J."/>
            <person name="Moon Y.H."/>
            <person name="Jeong H."/>
            <person name="Choy H.E."/>
        </authorList>
    </citation>
    <scope>NUCLEOTIDE SEQUENCE [LARGE SCALE GENOMIC DNA]</scope>
    <source>
        <strain>CMCP6</strain>
    </source>
</reference>
<name>COBQ_VIBVU</name>
<proteinExistence type="inferred from homology"/>
<protein>
    <recommendedName>
        <fullName evidence="1">Cobyric acid synthase</fullName>
    </recommendedName>
</protein>
<sequence>MEAKVTTLMVQGTTSDAGKSVLVAGLCRVLARKGVNVAPFKPQNMALNSAVTKEGGEIGRAQAVQAQACRIEPSVHMNPVLIKPNSDTGAQIILQGKALTNMDAYGFHNYKKVAMDTVMDSFARLKDEYQAIMIEGAGSPAEINLRQNDIANMGFAEEADVPVIIVADIDRGGVFAHLYGTLALLSPSEQARVKGFVINRFRGDIKLLESGLDWLEEKTGKPVIGVLPFLHGLNLEAEDAITSQQELSGEVKLKVVVPVLTRISNHTDFDVLRLHPQIDLRYVGKGERLEHADLIILPGSKSVRDDLRYLREQGWDKDILRHLRFGGKVLGICGGYQMLGESISDPFGVEGEPGESVGLGLLKTRTELTQDKCLINTKGQLSLNGKHVNVTGYEIHVGRSQVNEYQPITNDDGQLEGALSECGQIMGSYLHGFLDSEAVLELICEWVNGVRIKAQNHQQLKEQAIDRIADAIEEHLDLSQLGI</sequence>
<feature type="chain" id="PRO_0000141341" description="Cobyric acid synthase">
    <location>
        <begin position="1"/>
        <end position="483"/>
    </location>
</feature>
<feature type="domain" description="GATase cobBQ-type" evidence="1">
    <location>
        <begin position="252"/>
        <end position="439"/>
    </location>
</feature>
<feature type="active site" description="Nucleophile" evidence="1">
    <location>
        <position position="333"/>
    </location>
</feature>
<feature type="active site" evidence="1">
    <location>
        <position position="431"/>
    </location>
</feature>
<keyword id="KW-0169">Cobalamin biosynthesis</keyword>
<keyword id="KW-0315">Glutamine amidotransferase</keyword>
<evidence type="ECO:0000255" key="1">
    <source>
        <dbReference type="HAMAP-Rule" id="MF_00028"/>
    </source>
</evidence>
<dbReference type="EMBL" id="AE016796">
    <property type="protein sequence ID" value="AAO07290.1"/>
    <property type="molecule type" value="Genomic_DNA"/>
</dbReference>
<dbReference type="RefSeq" id="WP_011081291.1">
    <property type="nucleotide sequence ID" value="NC_004460.2"/>
</dbReference>
<dbReference type="SMR" id="Q8D737"/>
<dbReference type="KEGG" id="vvu:VV2_0330"/>
<dbReference type="HOGENOM" id="CLU_019250_2_2_6"/>
<dbReference type="UniPathway" id="UPA00148"/>
<dbReference type="Proteomes" id="UP000002275">
    <property type="component" value="Chromosome 2"/>
</dbReference>
<dbReference type="GO" id="GO:0015420">
    <property type="term" value="F:ABC-type vitamin B12 transporter activity"/>
    <property type="evidence" value="ECO:0007669"/>
    <property type="project" value="UniProtKB-UniRule"/>
</dbReference>
<dbReference type="GO" id="GO:0003824">
    <property type="term" value="F:catalytic activity"/>
    <property type="evidence" value="ECO:0007669"/>
    <property type="project" value="InterPro"/>
</dbReference>
<dbReference type="GO" id="GO:0009236">
    <property type="term" value="P:cobalamin biosynthetic process"/>
    <property type="evidence" value="ECO:0007669"/>
    <property type="project" value="UniProtKB-UniRule"/>
</dbReference>
<dbReference type="CDD" id="cd05389">
    <property type="entry name" value="CobQ_N"/>
    <property type="match status" value="1"/>
</dbReference>
<dbReference type="CDD" id="cd01750">
    <property type="entry name" value="GATase1_CobQ"/>
    <property type="match status" value="1"/>
</dbReference>
<dbReference type="Gene3D" id="3.40.50.880">
    <property type="match status" value="1"/>
</dbReference>
<dbReference type="Gene3D" id="3.40.50.300">
    <property type="entry name" value="P-loop containing nucleotide triphosphate hydrolases"/>
    <property type="match status" value="1"/>
</dbReference>
<dbReference type="HAMAP" id="MF_00028">
    <property type="entry name" value="CobQ"/>
    <property type="match status" value="1"/>
</dbReference>
<dbReference type="InterPro" id="IPR029062">
    <property type="entry name" value="Class_I_gatase-like"/>
</dbReference>
<dbReference type="InterPro" id="IPR002586">
    <property type="entry name" value="CobQ/CobB/MinD/ParA_Nub-bd_dom"/>
</dbReference>
<dbReference type="InterPro" id="IPR033949">
    <property type="entry name" value="CobQ_GATase1"/>
</dbReference>
<dbReference type="InterPro" id="IPR047045">
    <property type="entry name" value="CobQ_N"/>
</dbReference>
<dbReference type="InterPro" id="IPR004459">
    <property type="entry name" value="CobQ_synth"/>
</dbReference>
<dbReference type="InterPro" id="IPR011698">
    <property type="entry name" value="GATase_3"/>
</dbReference>
<dbReference type="InterPro" id="IPR027417">
    <property type="entry name" value="P-loop_NTPase"/>
</dbReference>
<dbReference type="NCBIfam" id="TIGR00313">
    <property type="entry name" value="cobQ"/>
    <property type="match status" value="1"/>
</dbReference>
<dbReference type="NCBIfam" id="NF001989">
    <property type="entry name" value="PRK00784.1"/>
    <property type="match status" value="1"/>
</dbReference>
<dbReference type="PANTHER" id="PTHR21343:SF1">
    <property type="entry name" value="COBYRIC ACID SYNTHASE"/>
    <property type="match status" value="1"/>
</dbReference>
<dbReference type="PANTHER" id="PTHR21343">
    <property type="entry name" value="DETHIOBIOTIN SYNTHETASE"/>
    <property type="match status" value="1"/>
</dbReference>
<dbReference type="Pfam" id="PF01656">
    <property type="entry name" value="CbiA"/>
    <property type="match status" value="1"/>
</dbReference>
<dbReference type="Pfam" id="PF07685">
    <property type="entry name" value="GATase_3"/>
    <property type="match status" value="1"/>
</dbReference>
<dbReference type="SUPFAM" id="SSF52317">
    <property type="entry name" value="Class I glutamine amidotransferase-like"/>
    <property type="match status" value="1"/>
</dbReference>
<dbReference type="SUPFAM" id="SSF52540">
    <property type="entry name" value="P-loop containing nucleoside triphosphate hydrolases"/>
    <property type="match status" value="1"/>
</dbReference>
<dbReference type="PROSITE" id="PS51274">
    <property type="entry name" value="GATASE_COBBQ"/>
    <property type="match status" value="1"/>
</dbReference>
<organism>
    <name type="scientific">Vibrio vulnificus (strain CMCP6)</name>
    <dbReference type="NCBI Taxonomy" id="216895"/>
    <lineage>
        <taxon>Bacteria</taxon>
        <taxon>Pseudomonadati</taxon>
        <taxon>Pseudomonadota</taxon>
        <taxon>Gammaproteobacteria</taxon>
        <taxon>Vibrionales</taxon>
        <taxon>Vibrionaceae</taxon>
        <taxon>Vibrio</taxon>
    </lineage>
</organism>
<comment type="function">
    <text evidence="1">Catalyzes amidations at positions B, D, E, and G on adenosylcobyrinic A,C-diamide. NH(2) groups are provided by glutamine, and one molecule of ATP is hydrogenolyzed for each amidation.</text>
</comment>
<comment type="pathway">
    <text evidence="1">Cofactor biosynthesis; adenosylcobalamin biosynthesis.</text>
</comment>
<comment type="similarity">
    <text evidence="1">Belongs to the CobB/CobQ family. CobQ subfamily.</text>
</comment>